<reference key="1">
    <citation type="journal article" date="2006" name="BMC Biol.">
        <title>The complete chloroplast DNA sequence of the green alga Oltmannsiellopsis viridis reveals a distinctive quadripartite architecture in the chloroplast genome of early diverging ulvophytes.</title>
        <authorList>
            <person name="Pombert J.-F."/>
            <person name="Lemieux C."/>
            <person name="Turmel M."/>
        </authorList>
    </citation>
    <scope>NUCLEOTIDE SEQUENCE [LARGE SCALE GENOMIC DNA]</scope>
</reference>
<gene>
    <name evidence="1" type="primary">atpA</name>
</gene>
<keyword id="KW-0066">ATP synthesis</keyword>
<keyword id="KW-0067">ATP-binding</keyword>
<keyword id="KW-0139">CF(1)</keyword>
<keyword id="KW-0150">Chloroplast</keyword>
<keyword id="KW-0375">Hydrogen ion transport</keyword>
<keyword id="KW-0406">Ion transport</keyword>
<keyword id="KW-0472">Membrane</keyword>
<keyword id="KW-0547">Nucleotide-binding</keyword>
<keyword id="KW-0934">Plastid</keyword>
<keyword id="KW-0793">Thylakoid</keyword>
<keyword id="KW-1278">Translocase</keyword>
<keyword id="KW-0813">Transport</keyword>
<geneLocation type="chloroplast"/>
<sequence>MVKIQPDEISSIIRQQIEQYSQEVKVVNVGTVFQVGDGIARIYGLEKVMAGELLEFEDGTVGIALNLEAKNVGAVLMGTGLSVQEGSSVRATGKIAQIPVGEAYLGRVVNALARPIDGKGEISADETRLIESVAPGIITRRSVHEPMQTGLISVDAMIPIGRGQRELIIGDRQTGKTAIALDTILNQKGNGVICVYVAIGQKASSIAQVVTTLEERGSLDYTIIVSATANEPATLQYLAPYTGAALAEYFMYTGRHTLVIYDDLTKQAQAYREMSLLLRRPPGREAYPGDVFYLHSRLLERAAKLNDELGSGSMTALPIVETQEGDVSAYIPTNVISITDGQIFLSADIFNANIRPAINVGISVSRVGSAAQPKAMKQVAGKLKLELAQFAELEAFSQFASDLDQATQNQLARGKRLRELLKQAQNSPLALADQVATIYAGCNGYLDTVETEEVRSFLIEFRQYLNSNKPKFGEIIRETNTLTEEAETILKEALSELL</sequence>
<organism>
    <name type="scientific">Oltmannsiellopsis viridis</name>
    <name type="common">Marine flagellate</name>
    <name type="synonym">Oltmannsiella viridis</name>
    <dbReference type="NCBI Taxonomy" id="51324"/>
    <lineage>
        <taxon>Eukaryota</taxon>
        <taxon>Viridiplantae</taxon>
        <taxon>Chlorophyta</taxon>
        <taxon>Ulvophyceae</taxon>
        <taxon>Oltmannsiellopsidales</taxon>
        <taxon>Oltmannsiellopsidaceae</taxon>
        <taxon>Oltmannsiellopsis</taxon>
    </lineage>
</organism>
<accession>Q20EV9</accession>
<evidence type="ECO:0000255" key="1">
    <source>
        <dbReference type="HAMAP-Rule" id="MF_01346"/>
    </source>
</evidence>
<feature type="chain" id="PRO_0000238430" description="ATP synthase subunit alpha, chloroplastic">
    <location>
        <begin position="1"/>
        <end position="498"/>
    </location>
</feature>
<feature type="binding site" evidence="1">
    <location>
        <begin position="170"/>
        <end position="177"/>
    </location>
    <ligand>
        <name>ATP</name>
        <dbReference type="ChEBI" id="CHEBI:30616"/>
    </ligand>
</feature>
<feature type="site" description="Required for activity" evidence="1">
    <location>
        <position position="363"/>
    </location>
</feature>
<name>ATPA_OLTVI</name>
<comment type="function">
    <text evidence="1">Produces ATP from ADP in the presence of a proton gradient across the membrane. The alpha chain is a regulatory subunit.</text>
</comment>
<comment type="catalytic activity">
    <reaction evidence="1">
        <text>ATP + H2O + 4 H(+)(in) = ADP + phosphate + 5 H(+)(out)</text>
        <dbReference type="Rhea" id="RHEA:57720"/>
        <dbReference type="ChEBI" id="CHEBI:15377"/>
        <dbReference type="ChEBI" id="CHEBI:15378"/>
        <dbReference type="ChEBI" id="CHEBI:30616"/>
        <dbReference type="ChEBI" id="CHEBI:43474"/>
        <dbReference type="ChEBI" id="CHEBI:456216"/>
        <dbReference type="EC" id="7.1.2.2"/>
    </reaction>
</comment>
<comment type="subunit">
    <text evidence="1">F-type ATPases have 2 components, CF(1) - the catalytic core - and CF(0) - the membrane proton channel. CF(1) has five subunits: alpha(3), beta(3), gamma(1), delta(1), epsilon(1). CF(0) has four main subunits: a, b, b' and c.</text>
</comment>
<comment type="subcellular location">
    <subcellularLocation>
        <location evidence="1">Plastid</location>
        <location evidence="1">Chloroplast thylakoid membrane</location>
        <topology evidence="1">Peripheral membrane protein</topology>
    </subcellularLocation>
</comment>
<comment type="similarity">
    <text evidence="1">Belongs to the ATPase alpha/beta chains family.</text>
</comment>
<protein>
    <recommendedName>
        <fullName evidence="1">ATP synthase subunit alpha, chloroplastic</fullName>
        <ecNumber evidence="1">7.1.2.2</ecNumber>
    </recommendedName>
    <alternativeName>
        <fullName evidence="1">ATP synthase F1 sector subunit alpha</fullName>
    </alternativeName>
    <alternativeName>
        <fullName evidence="1">F-ATPase subunit alpha</fullName>
    </alternativeName>
</protein>
<proteinExistence type="inferred from homology"/>
<dbReference type="EC" id="7.1.2.2" evidence="1"/>
<dbReference type="EMBL" id="DQ291132">
    <property type="protein sequence ID" value="ABB81954.1"/>
    <property type="molecule type" value="Genomic_DNA"/>
</dbReference>
<dbReference type="RefSeq" id="YP_635886.1">
    <property type="nucleotide sequence ID" value="NC_008099.1"/>
</dbReference>
<dbReference type="SMR" id="Q20EV9"/>
<dbReference type="GeneID" id="4100080"/>
<dbReference type="GO" id="GO:0009535">
    <property type="term" value="C:chloroplast thylakoid membrane"/>
    <property type="evidence" value="ECO:0007669"/>
    <property type="project" value="UniProtKB-SubCell"/>
</dbReference>
<dbReference type="GO" id="GO:0045259">
    <property type="term" value="C:proton-transporting ATP synthase complex"/>
    <property type="evidence" value="ECO:0007669"/>
    <property type="project" value="UniProtKB-KW"/>
</dbReference>
<dbReference type="GO" id="GO:0043531">
    <property type="term" value="F:ADP binding"/>
    <property type="evidence" value="ECO:0007669"/>
    <property type="project" value="TreeGrafter"/>
</dbReference>
<dbReference type="GO" id="GO:0005524">
    <property type="term" value="F:ATP binding"/>
    <property type="evidence" value="ECO:0007669"/>
    <property type="project" value="UniProtKB-UniRule"/>
</dbReference>
<dbReference type="GO" id="GO:0046933">
    <property type="term" value="F:proton-transporting ATP synthase activity, rotational mechanism"/>
    <property type="evidence" value="ECO:0007669"/>
    <property type="project" value="UniProtKB-UniRule"/>
</dbReference>
<dbReference type="CDD" id="cd18113">
    <property type="entry name" value="ATP-synt_F1_alpha_C"/>
    <property type="match status" value="1"/>
</dbReference>
<dbReference type="CDD" id="cd18116">
    <property type="entry name" value="ATP-synt_F1_alpha_N"/>
    <property type="match status" value="1"/>
</dbReference>
<dbReference type="CDD" id="cd01132">
    <property type="entry name" value="F1-ATPase_alpha_CD"/>
    <property type="match status" value="1"/>
</dbReference>
<dbReference type="FunFam" id="1.20.150.20:FF:000001">
    <property type="entry name" value="ATP synthase subunit alpha"/>
    <property type="match status" value="1"/>
</dbReference>
<dbReference type="FunFam" id="2.40.30.20:FF:000001">
    <property type="entry name" value="ATP synthase subunit alpha"/>
    <property type="match status" value="1"/>
</dbReference>
<dbReference type="FunFam" id="3.40.50.300:FF:000002">
    <property type="entry name" value="ATP synthase subunit alpha"/>
    <property type="match status" value="1"/>
</dbReference>
<dbReference type="Gene3D" id="2.40.30.20">
    <property type="match status" value="1"/>
</dbReference>
<dbReference type="Gene3D" id="1.20.150.20">
    <property type="entry name" value="ATP synthase alpha/beta chain, C-terminal domain"/>
    <property type="match status" value="1"/>
</dbReference>
<dbReference type="Gene3D" id="3.40.50.300">
    <property type="entry name" value="P-loop containing nucleotide triphosphate hydrolases"/>
    <property type="match status" value="1"/>
</dbReference>
<dbReference type="HAMAP" id="MF_01346">
    <property type="entry name" value="ATP_synth_alpha_bact"/>
    <property type="match status" value="1"/>
</dbReference>
<dbReference type="InterPro" id="IPR023366">
    <property type="entry name" value="ATP_synth_asu-like_sf"/>
</dbReference>
<dbReference type="InterPro" id="IPR000793">
    <property type="entry name" value="ATP_synth_asu_C"/>
</dbReference>
<dbReference type="InterPro" id="IPR038376">
    <property type="entry name" value="ATP_synth_asu_C_sf"/>
</dbReference>
<dbReference type="InterPro" id="IPR033732">
    <property type="entry name" value="ATP_synth_F1_a_nt-bd_dom"/>
</dbReference>
<dbReference type="InterPro" id="IPR005294">
    <property type="entry name" value="ATP_synth_F1_asu"/>
</dbReference>
<dbReference type="InterPro" id="IPR020003">
    <property type="entry name" value="ATPase_a/bsu_AS"/>
</dbReference>
<dbReference type="InterPro" id="IPR004100">
    <property type="entry name" value="ATPase_F1/V1/A1_a/bsu_N"/>
</dbReference>
<dbReference type="InterPro" id="IPR036121">
    <property type="entry name" value="ATPase_F1/V1/A1_a/bsu_N_sf"/>
</dbReference>
<dbReference type="InterPro" id="IPR000194">
    <property type="entry name" value="ATPase_F1/V1/A1_a/bsu_nucl-bd"/>
</dbReference>
<dbReference type="InterPro" id="IPR027417">
    <property type="entry name" value="P-loop_NTPase"/>
</dbReference>
<dbReference type="NCBIfam" id="TIGR00962">
    <property type="entry name" value="atpA"/>
    <property type="match status" value="1"/>
</dbReference>
<dbReference type="NCBIfam" id="NF009884">
    <property type="entry name" value="PRK13343.1"/>
    <property type="match status" value="1"/>
</dbReference>
<dbReference type="PANTHER" id="PTHR48082">
    <property type="entry name" value="ATP SYNTHASE SUBUNIT ALPHA, MITOCHONDRIAL"/>
    <property type="match status" value="1"/>
</dbReference>
<dbReference type="PANTHER" id="PTHR48082:SF2">
    <property type="entry name" value="ATP SYNTHASE SUBUNIT ALPHA, MITOCHONDRIAL"/>
    <property type="match status" value="1"/>
</dbReference>
<dbReference type="Pfam" id="PF00006">
    <property type="entry name" value="ATP-synt_ab"/>
    <property type="match status" value="1"/>
</dbReference>
<dbReference type="Pfam" id="PF00306">
    <property type="entry name" value="ATP-synt_ab_C"/>
    <property type="match status" value="1"/>
</dbReference>
<dbReference type="Pfam" id="PF02874">
    <property type="entry name" value="ATP-synt_ab_N"/>
    <property type="match status" value="1"/>
</dbReference>
<dbReference type="PIRSF" id="PIRSF039088">
    <property type="entry name" value="F_ATPase_subunit_alpha"/>
    <property type="match status" value="1"/>
</dbReference>
<dbReference type="SUPFAM" id="SSF47917">
    <property type="entry name" value="C-terminal domain of alpha and beta subunits of F1 ATP synthase"/>
    <property type="match status" value="1"/>
</dbReference>
<dbReference type="SUPFAM" id="SSF50615">
    <property type="entry name" value="N-terminal domain of alpha and beta subunits of F1 ATP synthase"/>
    <property type="match status" value="1"/>
</dbReference>
<dbReference type="SUPFAM" id="SSF52540">
    <property type="entry name" value="P-loop containing nucleoside triphosphate hydrolases"/>
    <property type="match status" value="1"/>
</dbReference>
<dbReference type="PROSITE" id="PS00152">
    <property type="entry name" value="ATPASE_ALPHA_BETA"/>
    <property type="match status" value="1"/>
</dbReference>